<name>KATG_PROA2</name>
<reference key="1">
    <citation type="submission" date="2008-06" db="EMBL/GenBank/DDBJ databases">
        <title>Complete sequence of chromosome of Prosthecochloris aestuarii DSM 271.</title>
        <authorList>
            <consortium name="US DOE Joint Genome Institute"/>
            <person name="Lucas S."/>
            <person name="Copeland A."/>
            <person name="Lapidus A."/>
            <person name="Glavina del Rio T."/>
            <person name="Dalin E."/>
            <person name="Tice H."/>
            <person name="Bruce D."/>
            <person name="Goodwin L."/>
            <person name="Pitluck S."/>
            <person name="Schmutz J."/>
            <person name="Larimer F."/>
            <person name="Land M."/>
            <person name="Hauser L."/>
            <person name="Kyrpides N."/>
            <person name="Anderson I."/>
            <person name="Liu Z."/>
            <person name="Li T."/>
            <person name="Zhao F."/>
            <person name="Overmann J."/>
            <person name="Bryant D.A."/>
            <person name="Richardson P."/>
        </authorList>
    </citation>
    <scope>NUCLEOTIDE SEQUENCE [LARGE SCALE GENOMIC DNA]</scope>
    <source>
        <strain>DSM 271 / SK 413</strain>
    </source>
</reference>
<organism>
    <name type="scientific">Prosthecochloris aestuarii (strain DSM 271 / SK 413)</name>
    <dbReference type="NCBI Taxonomy" id="290512"/>
    <lineage>
        <taxon>Bacteria</taxon>
        <taxon>Pseudomonadati</taxon>
        <taxon>Chlorobiota</taxon>
        <taxon>Chlorobiia</taxon>
        <taxon>Chlorobiales</taxon>
        <taxon>Chlorobiaceae</taxon>
        <taxon>Prosthecochloris</taxon>
    </lineage>
</organism>
<keyword id="KW-0349">Heme</keyword>
<keyword id="KW-0376">Hydrogen peroxide</keyword>
<keyword id="KW-0408">Iron</keyword>
<keyword id="KW-0479">Metal-binding</keyword>
<keyword id="KW-0560">Oxidoreductase</keyword>
<keyword id="KW-0575">Peroxidase</keyword>
<dbReference type="EC" id="1.11.1.21" evidence="1"/>
<dbReference type="EMBL" id="CP001108">
    <property type="protein sequence ID" value="ACF45207.1"/>
    <property type="molecule type" value="Genomic_DNA"/>
</dbReference>
<dbReference type="RefSeq" id="WP_012504744.1">
    <property type="nucleotide sequence ID" value="NC_011059.1"/>
</dbReference>
<dbReference type="SMR" id="B4S3B3"/>
<dbReference type="STRING" id="290512.Paes_0148"/>
<dbReference type="PeroxiBase" id="2534">
    <property type="entry name" value="PaeCP01"/>
</dbReference>
<dbReference type="KEGG" id="paa:Paes_0148"/>
<dbReference type="eggNOG" id="COG0376">
    <property type="taxonomic scope" value="Bacteria"/>
</dbReference>
<dbReference type="HOGENOM" id="CLU_025424_2_0_10"/>
<dbReference type="Proteomes" id="UP000002725">
    <property type="component" value="Chromosome"/>
</dbReference>
<dbReference type="GO" id="GO:0005829">
    <property type="term" value="C:cytosol"/>
    <property type="evidence" value="ECO:0007669"/>
    <property type="project" value="TreeGrafter"/>
</dbReference>
<dbReference type="GO" id="GO:0004096">
    <property type="term" value="F:catalase activity"/>
    <property type="evidence" value="ECO:0007669"/>
    <property type="project" value="UniProtKB-UniRule"/>
</dbReference>
<dbReference type="GO" id="GO:0020037">
    <property type="term" value="F:heme binding"/>
    <property type="evidence" value="ECO:0007669"/>
    <property type="project" value="InterPro"/>
</dbReference>
<dbReference type="GO" id="GO:0046872">
    <property type="term" value="F:metal ion binding"/>
    <property type="evidence" value="ECO:0007669"/>
    <property type="project" value="UniProtKB-KW"/>
</dbReference>
<dbReference type="GO" id="GO:0070301">
    <property type="term" value="P:cellular response to hydrogen peroxide"/>
    <property type="evidence" value="ECO:0007669"/>
    <property type="project" value="TreeGrafter"/>
</dbReference>
<dbReference type="GO" id="GO:0042744">
    <property type="term" value="P:hydrogen peroxide catabolic process"/>
    <property type="evidence" value="ECO:0007669"/>
    <property type="project" value="UniProtKB-KW"/>
</dbReference>
<dbReference type="CDD" id="cd00649">
    <property type="entry name" value="catalase_peroxidase_1"/>
    <property type="match status" value="1"/>
</dbReference>
<dbReference type="CDD" id="cd08200">
    <property type="entry name" value="catalase_peroxidase_2"/>
    <property type="match status" value="1"/>
</dbReference>
<dbReference type="FunFam" id="1.10.420.10:FF:000002">
    <property type="entry name" value="Catalase-peroxidase"/>
    <property type="match status" value="1"/>
</dbReference>
<dbReference type="FunFam" id="1.10.420.10:FF:000004">
    <property type="entry name" value="Catalase-peroxidase"/>
    <property type="match status" value="1"/>
</dbReference>
<dbReference type="FunFam" id="1.10.520.10:FF:000002">
    <property type="entry name" value="Catalase-peroxidase"/>
    <property type="match status" value="1"/>
</dbReference>
<dbReference type="Gene3D" id="1.10.520.10">
    <property type="match status" value="2"/>
</dbReference>
<dbReference type="Gene3D" id="1.10.420.10">
    <property type="entry name" value="Peroxidase, domain 2"/>
    <property type="match status" value="2"/>
</dbReference>
<dbReference type="HAMAP" id="MF_01961">
    <property type="entry name" value="Catal_peroxid"/>
    <property type="match status" value="1"/>
</dbReference>
<dbReference type="InterPro" id="IPR000763">
    <property type="entry name" value="Catalase_peroxidase"/>
</dbReference>
<dbReference type="InterPro" id="IPR002016">
    <property type="entry name" value="Haem_peroxidase"/>
</dbReference>
<dbReference type="InterPro" id="IPR010255">
    <property type="entry name" value="Haem_peroxidase_sf"/>
</dbReference>
<dbReference type="InterPro" id="IPR019794">
    <property type="entry name" value="Peroxidases_AS"/>
</dbReference>
<dbReference type="InterPro" id="IPR019793">
    <property type="entry name" value="Peroxidases_heam-ligand_BS"/>
</dbReference>
<dbReference type="NCBIfam" id="TIGR00198">
    <property type="entry name" value="cat_per_HPI"/>
    <property type="match status" value="1"/>
</dbReference>
<dbReference type="NCBIfam" id="NF011635">
    <property type="entry name" value="PRK15061.1"/>
    <property type="match status" value="1"/>
</dbReference>
<dbReference type="PANTHER" id="PTHR30555:SF0">
    <property type="entry name" value="CATALASE-PEROXIDASE"/>
    <property type="match status" value="1"/>
</dbReference>
<dbReference type="PANTHER" id="PTHR30555">
    <property type="entry name" value="HYDROPEROXIDASE I, BIFUNCTIONAL CATALASE-PEROXIDASE"/>
    <property type="match status" value="1"/>
</dbReference>
<dbReference type="Pfam" id="PF00141">
    <property type="entry name" value="peroxidase"/>
    <property type="match status" value="2"/>
</dbReference>
<dbReference type="PRINTS" id="PR00460">
    <property type="entry name" value="BPEROXIDASE"/>
</dbReference>
<dbReference type="PRINTS" id="PR00458">
    <property type="entry name" value="PEROXIDASE"/>
</dbReference>
<dbReference type="SUPFAM" id="SSF48113">
    <property type="entry name" value="Heme-dependent peroxidases"/>
    <property type="match status" value="2"/>
</dbReference>
<dbReference type="PROSITE" id="PS00435">
    <property type="entry name" value="PEROXIDASE_1"/>
    <property type="match status" value="1"/>
</dbReference>
<dbReference type="PROSITE" id="PS00436">
    <property type="entry name" value="PEROXIDASE_2"/>
    <property type="match status" value="1"/>
</dbReference>
<dbReference type="PROSITE" id="PS50873">
    <property type="entry name" value="PEROXIDASE_4"/>
    <property type="match status" value="1"/>
</dbReference>
<sequence length="732" mass="81510">MSEQSRCPVTGRTADSPATGSGLSNRDWWPNQLHLDMLHQHSSLVNPMGEGFRYKEEFGKLDLKEVKKDLYALMTDSQEWWPADYGHYGGLFIRMAWHSAGTYRTSDGRGGGGTGNQRFAPLNSWPDNANLDKARRLLWPIKQKYGKKISWADLMILAGNCALESMGFKTFGFGGGRVDIWEPEEDIYWGKEVEWLGNKRYSGERDLENPLAAVQMGLIYVNPEGPDGKPDPVAAGRDIRETFARMAMNDEETVALVAGGHTFGKCHGVGDPKLVGPEPEAADIEEQGLGWKSGYGIGKGDETMTSGLEGAWTPDPIHWDMGYLGMLFRYEWELTKSPAGAWQWKPKDVAEEDLAPAAHDPSKRVPTMMTTADLAMRMDPIYGPISQRYYEHPDQFADAFARAWFKLTHRDMGPHSRYLGAEVPAEELIWQDPVPALDHDLIDAEEIAELKKRLLASGLSIPELVSTAWASASTFRGSDKRGGANGARIRLAPQKDWEVNQPEQLQRVLHKLEEIRNTFNGEQSGNKQVSLADMIVLGGCAAVEEAAGKAGTGVTVPFTPGRTDALQEQTDTESFSVLEPLADGFRNYMKKKYSVSAEEMLVDRSQLLTLTAPEMTVLLGGLRVLGANFQQSPHGVFTTQPETLTNDYFVNLLDMGTEWKPLSKEQDTFEGRDRKTGEPRWTATRVDLIFGSNSRLRAIAEVYGSDDAQEKFVHDFVAAWDKVMNLDRFDLG</sequence>
<proteinExistence type="inferred from homology"/>
<feature type="chain" id="PRO_0000354861" description="Catalase-peroxidase">
    <location>
        <begin position="1"/>
        <end position="732"/>
    </location>
</feature>
<feature type="region of interest" description="Disordered" evidence="2">
    <location>
        <begin position="1"/>
        <end position="23"/>
    </location>
</feature>
<feature type="active site" description="Proton acceptor" evidence="1">
    <location>
        <position position="98"/>
    </location>
</feature>
<feature type="binding site" description="axial binding residue" evidence="1">
    <location>
        <position position="261"/>
    </location>
    <ligand>
        <name>heme b</name>
        <dbReference type="ChEBI" id="CHEBI:60344"/>
    </ligand>
    <ligandPart>
        <name>Fe</name>
        <dbReference type="ChEBI" id="CHEBI:18248"/>
    </ligandPart>
</feature>
<feature type="site" description="Transition state stabilizer" evidence="1">
    <location>
        <position position="94"/>
    </location>
</feature>
<feature type="cross-link" description="Tryptophyl-tyrosyl-methioninium (Trp-Tyr) (with M-246)" evidence="1">
    <location>
        <begin position="97"/>
        <end position="220"/>
    </location>
</feature>
<feature type="cross-link" description="Tryptophyl-tyrosyl-methioninium (Tyr-Met) (with W-97)" evidence="1">
    <location>
        <begin position="220"/>
        <end position="246"/>
    </location>
</feature>
<protein>
    <recommendedName>
        <fullName evidence="1">Catalase-peroxidase</fullName>
        <shortName evidence="1">CP</shortName>
        <ecNumber evidence="1">1.11.1.21</ecNumber>
    </recommendedName>
    <alternativeName>
        <fullName evidence="1">Peroxidase/catalase</fullName>
    </alternativeName>
</protein>
<accession>B4S3B3</accession>
<evidence type="ECO:0000255" key="1">
    <source>
        <dbReference type="HAMAP-Rule" id="MF_01961"/>
    </source>
</evidence>
<evidence type="ECO:0000256" key="2">
    <source>
        <dbReference type="SAM" id="MobiDB-lite"/>
    </source>
</evidence>
<gene>
    <name evidence="1" type="primary">katG</name>
    <name type="ordered locus">Paes_0148</name>
</gene>
<comment type="function">
    <text evidence="1">Bifunctional enzyme with both catalase and broad-spectrum peroxidase activity.</text>
</comment>
<comment type="catalytic activity">
    <reaction evidence="1">
        <text>H2O2 + AH2 = A + 2 H2O</text>
        <dbReference type="Rhea" id="RHEA:30275"/>
        <dbReference type="ChEBI" id="CHEBI:13193"/>
        <dbReference type="ChEBI" id="CHEBI:15377"/>
        <dbReference type="ChEBI" id="CHEBI:16240"/>
        <dbReference type="ChEBI" id="CHEBI:17499"/>
        <dbReference type="EC" id="1.11.1.21"/>
    </reaction>
</comment>
<comment type="catalytic activity">
    <reaction evidence="1">
        <text>2 H2O2 = O2 + 2 H2O</text>
        <dbReference type="Rhea" id="RHEA:20309"/>
        <dbReference type="ChEBI" id="CHEBI:15377"/>
        <dbReference type="ChEBI" id="CHEBI:15379"/>
        <dbReference type="ChEBI" id="CHEBI:16240"/>
        <dbReference type="EC" id="1.11.1.21"/>
    </reaction>
</comment>
<comment type="cofactor">
    <cofactor evidence="1">
        <name>heme b</name>
        <dbReference type="ChEBI" id="CHEBI:60344"/>
    </cofactor>
    <text evidence="1">Binds 1 heme b (iron(II)-protoporphyrin IX) group per dimer.</text>
</comment>
<comment type="subunit">
    <text evidence="1">Homodimer or homotetramer.</text>
</comment>
<comment type="PTM">
    <text evidence="1">Formation of the three residue Trp-Tyr-Met cross-link is important for the catalase, but not the peroxidase activity of the enzyme.</text>
</comment>
<comment type="similarity">
    <text evidence="1">Belongs to the peroxidase family. Peroxidase/catalase subfamily.</text>
</comment>